<name>PUS3_MOUSE</name>
<protein>
    <recommendedName>
        <fullName>tRNA pseudouridine(38/39) synthase</fullName>
        <ecNumber evidence="3">5.4.99.45</ecNumber>
    </recommendedName>
    <alternativeName>
        <fullName>tRNA pseudouridine synthase 3</fullName>
    </alternativeName>
    <alternativeName>
        <fullName>tRNA pseudouridylate synthase 3</fullName>
    </alternativeName>
    <alternativeName>
        <fullName>tRNA-uridine isomerase 3</fullName>
    </alternativeName>
</protein>
<accession>Q9JI38</accession>
<accession>Q8BVA6</accession>
<accession>Q8K0Y3</accession>
<dbReference type="EC" id="5.4.99.45" evidence="3"/>
<dbReference type="EMBL" id="AF266505">
    <property type="protein sequence ID" value="AAF91402.1"/>
    <property type="molecule type" value="mRNA"/>
</dbReference>
<dbReference type="EMBL" id="AK079095">
    <property type="protein sequence ID" value="BAC37536.1"/>
    <property type="molecule type" value="mRNA"/>
</dbReference>
<dbReference type="EMBL" id="BC029253">
    <property type="protein sequence ID" value="AAH29253.1"/>
    <property type="molecule type" value="mRNA"/>
</dbReference>
<dbReference type="CCDS" id="CCDS22965.1"/>
<dbReference type="RefSeq" id="NP_075781.3">
    <property type="nucleotide sequence ID" value="NM_023292.4"/>
</dbReference>
<dbReference type="RefSeq" id="XP_011240888.1">
    <property type="nucleotide sequence ID" value="XM_011242586.2"/>
</dbReference>
<dbReference type="SMR" id="Q9JI38"/>
<dbReference type="BioGRID" id="211902">
    <property type="interactions" value="5"/>
</dbReference>
<dbReference type="FunCoup" id="Q9JI38">
    <property type="interactions" value="3334"/>
</dbReference>
<dbReference type="STRING" id="10090.ENSMUSP00000034615"/>
<dbReference type="iPTMnet" id="Q9JI38"/>
<dbReference type="PhosphoSitePlus" id="Q9JI38"/>
<dbReference type="PaxDb" id="10090-ENSMUSP00000034615"/>
<dbReference type="PeptideAtlas" id="Q9JI38"/>
<dbReference type="ProteomicsDB" id="301833"/>
<dbReference type="Antibodypedia" id="46038">
    <property type="antibodies" value="90 antibodies from 22 providers"/>
</dbReference>
<dbReference type="DNASU" id="67049"/>
<dbReference type="Ensembl" id="ENSMUST00000034615.10">
    <property type="protein sequence ID" value="ENSMUSP00000034615.3"/>
    <property type="gene ID" value="ENSMUSG00000032103.11"/>
</dbReference>
<dbReference type="GeneID" id="67049"/>
<dbReference type="KEGG" id="mmu:67049"/>
<dbReference type="UCSC" id="uc009oth.2">
    <property type="organism name" value="mouse"/>
</dbReference>
<dbReference type="AGR" id="MGI:1914299"/>
<dbReference type="CTD" id="83480"/>
<dbReference type="MGI" id="MGI:1914299">
    <property type="gene designation" value="Pus3"/>
</dbReference>
<dbReference type="VEuPathDB" id="HostDB:ENSMUSG00000032103"/>
<dbReference type="eggNOG" id="KOG2554">
    <property type="taxonomic scope" value="Eukaryota"/>
</dbReference>
<dbReference type="GeneTree" id="ENSGT00950000183160"/>
<dbReference type="HOGENOM" id="CLU_014673_2_0_1"/>
<dbReference type="InParanoid" id="Q9JI38"/>
<dbReference type="OMA" id="YFGWEYN"/>
<dbReference type="OrthoDB" id="25767at2759"/>
<dbReference type="PhylomeDB" id="Q9JI38"/>
<dbReference type="TreeFam" id="TF314428"/>
<dbReference type="BRENDA" id="4.2.1.70">
    <property type="organism ID" value="3474"/>
</dbReference>
<dbReference type="BRENDA" id="5.4.99.12">
    <property type="organism ID" value="3474"/>
</dbReference>
<dbReference type="BRENDA" id="5.4.99.45">
    <property type="organism ID" value="3474"/>
</dbReference>
<dbReference type="BioGRID-ORCS" id="67049">
    <property type="hits" value="14 hits in 74 CRISPR screens"/>
</dbReference>
<dbReference type="ChiTaRS" id="Pus3">
    <property type="organism name" value="mouse"/>
</dbReference>
<dbReference type="PRO" id="PR:Q9JI38"/>
<dbReference type="Proteomes" id="UP000000589">
    <property type="component" value="Chromosome 9"/>
</dbReference>
<dbReference type="RNAct" id="Q9JI38">
    <property type="molecule type" value="protein"/>
</dbReference>
<dbReference type="Bgee" id="ENSMUSG00000032103">
    <property type="expression patterns" value="Expressed in rostral migratory stream and 251 other cell types or tissues"/>
</dbReference>
<dbReference type="ExpressionAtlas" id="Q9JI38">
    <property type="expression patterns" value="baseline and differential"/>
</dbReference>
<dbReference type="GO" id="GO:0005634">
    <property type="term" value="C:nucleus"/>
    <property type="evidence" value="ECO:0007669"/>
    <property type="project" value="UniProtKB-SubCell"/>
</dbReference>
<dbReference type="GO" id="GO:0009982">
    <property type="term" value="F:pseudouridine synthase activity"/>
    <property type="evidence" value="ECO:0000314"/>
    <property type="project" value="MGI"/>
</dbReference>
<dbReference type="GO" id="GO:0003723">
    <property type="term" value="F:RNA binding"/>
    <property type="evidence" value="ECO:0007669"/>
    <property type="project" value="InterPro"/>
</dbReference>
<dbReference type="GO" id="GO:0160154">
    <property type="term" value="F:tRNA pseudouridine(38/39) synthase activity"/>
    <property type="evidence" value="ECO:0007669"/>
    <property type="project" value="UniProtKB-EC"/>
</dbReference>
<dbReference type="GO" id="GO:0031119">
    <property type="term" value="P:tRNA pseudouridine synthesis"/>
    <property type="evidence" value="ECO:0000314"/>
    <property type="project" value="MGI"/>
</dbReference>
<dbReference type="CDD" id="cd02569">
    <property type="entry name" value="PseudoU_synth_ScPus3"/>
    <property type="match status" value="1"/>
</dbReference>
<dbReference type="FunFam" id="3.30.70.580:FF:000007">
    <property type="entry name" value="tRNA pseudouridine synthase"/>
    <property type="match status" value="1"/>
</dbReference>
<dbReference type="FunFam" id="3.30.70.660:FF:000005">
    <property type="entry name" value="tRNA pseudouridine synthase"/>
    <property type="match status" value="1"/>
</dbReference>
<dbReference type="Gene3D" id="3.30.70.660">
    <property type="entry name" value="Pseudouridine synthase I, catalytic domain, C-terminal subdomain"/>
    <property type="match status" value="1"/>
</dbReference>
<dbReference type="Gene3D" id="3.30.70.580">
    <property type="entry name" value="Pseudouridine synthase I, catalytic domain, N-terminal subdomain"/>
    <property type="match status" value="1"/>
</dbReference>
<dbReference type="HAMAP" id="MF_00171">
    <property type="entry name" value="TruA"/>
    <property type="match status" value="1"/>
</dbReference>
<dbReference type="InterPro" id="IPR020103">
    <property type="entry name" value="PsdUridine_synth_cat_dom_sf"/>
</dbReference>
<dbReference type="InterPro" id="IPR001406">
    <property type="entry name" value="PsdUridine_synth_TruA"/>
</dbReference>
<dbReference type="InterPro" id="IPR020097">
    <property type="entry name" value="PsdUridine_synth_TruA_a/b_dom"/>
</dbReference>
<dbReference type="InterPro" id="IPR020095">
    <property type="entry name" value="PsdUridine_synth_TruA_C"/>
</dbReference>
<dbReference type="InterPro" id="IPR041707">
    <property type="entry name" value="Pus3-like"/>
</dbReference>
<dbReference type="InterPro" id="IPR020094">
    <property type="entry name" value="TruA/RsuA/RluB/E/F_N"/>
</dbReference>
<dbReference type="NCBIfam" id="TIGR00071">
    <property type="entry name" value="hisT_truA"/>
    <property type="match status" value="1"/>
</dbReference>
<dbReference type="PANTHER" id="PTHR11142">
    <property type="entry name" value="PSEUDOURIDYLATE SYNTHASE"/>
    <property type="match status" value="1"/>
</dbReference>
<dbReference type="PANTHER" id="PTHR11142:SF5">
    <property type="entry name" value="TRNA PSEUDOURIDINE(38_39) SYNTHASE"/>
    <property type="match status" value="1"/>
</dbReference>
<dbReference type="Pfam" id="PF01416">
    <property type="entry name" value="PseudoU_synth_1"/>
    <property type="match status" value="1"/>
</dbReference>
<dbReference type="SUPFAM" id="SSF55120">
    <property type="entry name" value="Pseudouridine synthase"/>
    <property type="match status" value="1"/>
</dbReference>
<sequence>MAENTDRNQIEKLLNRVKELEQEVERLKKKKEQANNIKDSSIRENSLGSGKAKRAFDFSAHGRRHVALKIAYLGWGYQGFASQENTSNTIEEKLFEALTKTRLVESRQTSNYHRCGRTDKGVSAFGQVISLDLRSQFPTSRDSEDSNLKHEADDLAKEIRYTHILNRVLPADIRVLAWAPVEPSFSARFSCLERTYRYFFPRADLDIATMNYAAQKYVGTHDFRNLCKMDVANGVINFQRTILCAQVQLVAQSPGEERRQEPFQLCQFEVIGQAFLYHQVRCMMAILFLIGQGMEKPEIIDELLNIQKNPQKPQYSMAVEFPLVLYDCKFENTKWIYDHEVQEFNVTHLQQLWANHAVKTHMLYSMLQGLDSVMVTCAAGTKMDEATEWRNIQPPVIKHTSAFVEGVKMRTYKPLMDRPKCQGLESRIRHFVSRGRIEHPHLLHKEEIKARRDCADKEENTVVENPSKRVCIIDAEINSIA</sequence>
<keyword id="KW-0007">Acetylation</keyword>
<keyword id="KW-0903">Direct protein sequencing</keyword>
<keyword id="KW-0413">Isomerase</keyword>
<keyword id="KW-0539">Nucleus</keyword>
<keyword id="KW-1185">Reference proteome</keyword>
<keyword id="KW-0819">tRNA processing</keyword>
<feature type="initiator methionine" description="Removed" evidence="2">
    <location>
        <position position="1"/>
    </location>
</feature>
<feature type="chain" id="PRO_0000057521" description="tRNA pseudouridine(38/39) synthase">
    <location>
        <begin position="2"/>
        <end position="481"/>
    </location>
</feature>
<feature type="active site" description="Nucleophile" evidence="1">
    <location>
        <position position="119"/>
    </location>
</feature>
<feature type="binding site" evidence="1">
    <location>
        <position position="196"/>
    </location>
    <ligand>
        <name>substrate</name>
    </ligand>
</feature>
<feature type="modified residue" description="N-acetylalanine" evidence="2">
    <location>
        <position position="2"/>
    </location>
</feature>
<feature type="sequence conflict" description="In Ref. 1; AAF91402." evidence="4" ref="1">
    <original>N</original>
    <variation>D</variation>
    <location>
        <position position="237"/>
    </location>
</feature>
<feature type="sequence conflict" description="In Ref. 2; BAC37536." evidence="4" ref="2">
    <original>D</original>
    <variation>G</variation>
    <location>
        <position position="384"/>
    </location>
</feature>
<evidence type="ECO:0000250" key="1"/>
<evidence type="ECO:0000250" key="2">
    <source>
        <dbReference type="UniProtKB" id="Q9BZE2"/>
    </source>
</evidence>
<evidence type="ECO:0000269" key="3">
    <source>
    </source>
</evidence>
<evidence type="ECO:0000305" key="4"/>
<proteinExistence type="evidence at protein level"/>
<comment type="function">
    <text evidence="3">Formation of pseudouridine at position 39 in the anticodon stem and loop of transfer RNAs. Also acts on position 38, but much less efficiently.</text>
</comment>
<comment type="catalytic activity">
    <reaction evidence="3">
        <text>uridine(38/39) in tRNA = pseudouridine(38/39) in tRNA</text>
        <dbReference type="Rhea" id="RHEA:42564"/>
        <dbReference type="Rhea" id="RHEA-COMP:10117"/>
        <dbReference type="Rhea" id="RHEA-COMP:10118"/>
        <dbReference type="ChEBI" id="CHEBI:65314"/>
        <dbReference type="ChEBI" id="CHEBI:65315"/>
        <dbReference type="EC" id="5.4.99.45"/>
    </reaction>
</comment>
<comment type="subcellular location">
    <subcellularLocation>
        <location evidence="4">Nucleus</location>
    </subcellularLocation>
</comment>
<comment type="similarity">
    <text evidence="4">Belongs to the tRNA pseudouridine synthase TruA family.</text>
</comment>
<organism>
    <name type="scientific">Mus musculus</name>
    <name type="common">Mouse</name>
    <dbReference type="NCBI Taxonomy" id="10090"/>
    <lineage>
        <taxon>Eukaryota</taxon>
        <taxon>Metazoa</taxon>
        <taxon>Chordata</taxon>
        <taxon>Craniata</taxon>
        <taxon>Vertebrata</taxon>
        <taxon>Euteleostomi</taxon>
        <taxon>Mammalia</taxon>
        <taxon>Eutheria</taxon>
        <taxon>Euarchontoglires</taxon>
        <taxon>Glires</taxon>
        <taxon>Rodentia</taxon>
        <taxon>Myomorpha</taxon>
        <taxon>Muroidea</taxon>
        <taxon>Muridae</taxon>
        <taxon>Murinae</taxon>
        <taxon>Mus</taxon>
        <taxon>Mus</taxon>
    </lineage>
</organism>
<reference key="1">
    <citation type="journal article" date="2000" name="Biochemistry">
        <title>Pseudouridine synthase 3 from mouse modifies the anticodon loop of tRNA.</title>
        <authorList>
            <person name="Chen J."/>
            <person name="Patton J.R."/>
        </authorList>
    </citation>
    <scope>NUCLEOTIDE SEQUENCE [MRNA]</scope>
    <scope>FUNCTION</scope>
    <scope>CATALYTIC ACTIVITY</scope>
</reference>
<reference key="2">
    <citation type="journal article" date="2005" name="Science">
        <title>The transcriptional landscape of the mammalian genome.</title>
        <authorList>
            <person name="Carninci P."/>
            <person name="Kasukawa T."/>
            <person name="Katayama S."/>
            <person name="Gough J."/>
            <person name="Frith M.C."/>
            <person name="Maeda N."/>
            <person name="Oyama R."/>
            <person name="Ravasi T."/>
            <person name="Lenhard B."/>
            <person name="Wells C."/>
            <person name="Kodzius R."/>
            <person name="Shimokawa K."/>
            <person name="Bajic V.B."/>
            <person name="Brenner S.E."/>
            <person name="Batalov S."/>
            <person name="Forrest A.R."/>
            <person name="Zavolan M."/>
            <person name="Davis M.J."/>
            <person name="Wilming L.G."/>
            <person name="Aidinis V."/>
            <person name="Allen J.E."/>
            <person name="Ambesi-Impiombato A."/>
            <person name="Apweiler R."/>
            <person name="Aturaliya R.N."/>
            <person name="Bailey T.L."/>
            <person name="Bansal M."/>
            <person name="Baxter L."/>
            <person name="Beisel K.W."/>
            <person name="Bersano T."/>
            <person name="Bono H."/>
            <person name="Chalk A.M."/>
            <person name="Chiu K.P."/>
            <person name="Choudhary V."/>
            <person name="Christoffels A."/>
            <person name="Clutterbuck D.R."/>
            <person name="Crowe M.L."/>
            <person name="Dalla E."/>
            <person name="Dalrymple B.P."/>
            <person name="de Bono B."/>
            <person name="Della Gatta G."/>
            <person name="di Bernardo D."/>
            <person name="Down T."/>
            <person name="Engstrom P."/>
            <person name="Fagiolini M."/>
            <person name="Faulkner G."/>
            <person name="Fletcher C.F."/>
            <person name="Fukushima T."/>
            <person name="Furuno M."/>
            <person name="Futaki S."/>
            <person name="Gariboldi M."/>
            <person name="Georgii-Hemming P."/>
            <person name="Gingeras T.R."/>
            <person name="Gojobori T."/>
            <person name="Green R.E."/>
            <person name="Gustincich S."/>
            <person name="Harbers M."/>
            <person name="Hayashi Y."/>
            <person name="Hensch T.K."/>
            <person name="Hirokawa N."/>
            <person name="Hill D."/>
            <person name="Huminiecki L."/>
            <person name="Iacono M."/>
            <person name="Ikeo K."/>
            <person name="Iwama A."/>
            <person name="Ishikawa T."/>
            <person name="Jakt M."/>
            <person name="Kanapin A."/>
            <person name="Katoh M."/>
            <person name="Kawasawa Y."/>
            <person name="Kelso J."/>
            <person name="Kitamura H."/>
            <person name="Kitano H."/>
            <person name="Kollias G."/>
            <person name="Krishnan S.P."/>
            <person name="Kruger A."/>
            <person name="Kummerfeld S.K."/>
            <person name="Kurochkin I.V."/>
            <person name="Lareau L.F."/>
            <person name="Lazarevic D."/>
            <person name="Lipovich L."/>
            <person name="Liu J."/>
            <person name="Liuni S."/>
            <person name="McWilliam S."/>
            <person name="Madan Babu M."/>
            <person name="Madera M."/>
            <person name="Marchionni L."/>
            <person name="Matsuda H."/>
            <person name="Matsuzawa S."/>
            <person name="Miki H."/>
            <person name="Mignone F."/>
            <person name="Miyake S."/>
            <person name="Morris K."/>
            <person name="Mottagui-Tabar S."/>
            <person name="Mulder N."/>
            <person name="Nakano N."/>
            <person name="Nakauchi H."/>
            <person name="Ng P."/>
            <person name="Nilsson R."/>
            <person name="Nishiguchi S."/>
            <person name="Nishikawa S."/>
            <person name="Nori F."/>
            <person name="Ohara O."/>
            <person name="Okazaki Y."/>
            <person name="Orlando V."/>
            <person name="Pang K.C."/>
            <person name="Pavan W.J."/>
            <person name="Pavesi G."/>
            <person name="Pesole G."/>
            <person name="Petrovsky N."/>
            <person name="Piazza S."/>
            <person name="Reed J."/>
            <person name="Reid J.F."/>
            <person name="Ring B.Z."/>
            <person name="Ringwald M."/>
            <person name="Rost B."/>
            <person name="Ruan Y."/>
            <person name="Salzberg S.L."/>
            <person name="Sandelin A."/>
            <person name="Schneider C."/>
            <person name="Schoenbach C."/>
            <person name="Sekiguchi K."/>
            <person name="Semple C.A."/>
            <person name="Seno S."/>
            <person name="Sessa L."/>
            <person name="Sheng Y."/>
            <person name="Shibata Y."/>
            <person name="Shimada H."/>
            <person name="Shimada K."/>
            <person name="Silva D."/>
            <person name="Sinclair B."/>
            <person name="Sperling S."/>
            <person name="Stupka E."/>
            <person name="Sugiura K."/>
            <person name="Sultana R."/>
            <person name="Takenaka Y."/>
            <person name="Taki K."/>
            <person name="Tammoja K."/>
            <person name="Tan S.L."/>
            <person name="Tang S."/>
            <person name="Taylor M.S."/>
            <person name="Tegner J."/>
            <person name="Teichmann S.A."/>
            <person name="Ueda H.R."/>
            <person name="van Nimwegen E."/>
            <person name="Verardo R."/>
            <person name="Wei C.L."/>
            <person name="Yagi K."/>
            <person name="Yamanishi H."/>
            <person name="Zabarovsky E."/>
            <person name="Zhu S."/>
            <person name="Zimmer A."/>
            <person name="Hide W."/>
            <person name="Bult C."/>
            <person name="Grimmond S.M."/>
            <person name="Teasdale R.D."/>
            <person name="Liu E.T."/>
            <person name="Brusic V."/>
            <person name="Quackenbush J."/>
            <person name="Wahlestedt C."/>
            <person name="Mattick J.S."/>
            <person name="Hume D.A."/>
            <person name="Kai C."/>
            <person name="Sasaki D."/>
            <person name="Tomaru Y."/>
            <person name="Fukuda S."/>
            <person name="Kanamori-Katayama M."/>
            <person name="Suzuki M."/>
            <person name="Aoki J."/>
            <person name="Arakawa T."/>
            <person name="Iida J."/>
            <person name="Imamura K."/>
            <person name="Itoh M."/>
            <person name="Kato T."/>
            <person name="Kawaji H."/>
            <person name="Kawagashira N."/>
            <person name="Kawashima T."/>
            <person name="Kojima M."/>
            <person name="Kondo S."/>
            <person name="Konno H."/>
            <person name="Nakano K."/>
            <person name="Ninomiya N."/>
            <person name="Nishio T."/>
            <person name="Okada M."/>
            <person name="Plessy C."/>
            <person name="Shibata K."/>
            <person name="Shiraki T."/>
            <person name="Suzuki S."/>
            <person name="Tagami M."/>
            <person name="Waki K."/>
            <person name="Watahiki A."/>
            <person name="Okamura-Oho Y."/>
            <person name="Suzuki H."/>
            <person name="Kawai J."/>
            <person name="Hayashizaki Y."/>
        </authorList>
    </citation>
    <scope>NUCLEOTIDE SEQUENCE [LARGE SCALE MRNA]</scope>
    <source>
        <strain>C57BL/6J</strain>
        <tissue>Diencephalon</tissue>
    </source>
</reference>
<reference key="3">
    <citation type="journal article" date="2004" name="Genome Res.">
        <title>The status, quality, and expansion of the NIH full-length cDNA project: the Mammalian Gene Collection (MGC).</title>
        <authorList>
            <consortium name="The MGC Project Team"/>
        </authorList>
    </citation>
    <scope>NUCLEOTIDE SEQUENCE [LARGE SCALE MRNA]</scope>
    <source>
        <strain>FVB/N</strain>
        <tissue>Salivary gland</tissue>
    </source>
</reference>
<reference key="4">
    <citation type="submission" date="2009-01" db="UniProtKB">
        <authorList>
            <person name="Lubec G."/>
            <person name="Sunyer B."/>
            <person name="Chen W.-Q."/>
        </authorList>
    </citation>
    <scope>PROTEIN SEQUENCE OF 142-149</scope>
    <scope>IDENTIFICATION BY MASS SPECTROMETRY</scope>
    <source>
        <strain>OF1</strain>
        <tissue>Hippocampus</tissue>
    </source>
</reference>
<gene>
    <name type="primary">Pus3</name>
</gene>